<keyword id="KW-0963">Cytoplasm</keyword>
<keyword id="KW-0275">Fatty acid biosynthesis</keyword>
<keyword id="KW-0276">Fatty acid metabolism</keyword>
<keyword id="KW-0444">Lipid biosynthesis</keyword>
<keyword id="KW-0443">Lipid metabolism</keyword>
<keyword id="KW-0596">Phosphopantetheine</keyword>
<keyword id="KW-0597">Phosphoprotein</keyword>
<keyword id="KW-1185">Reference proteome</keyword>
<comment type="function">
    <text evidence="1">Carrier of the growing fatty acid chain in fatty acid biosynthesis.</text>
</comment>
<comment type="pathway">
    <text evidence="1">Lipid metabolism; fatty acid biosynthesis.</text>
</comment>
<comment type="subcellular location">
    <subcellularLocation>
        <location evidence="1">Cytoplasm</location>
    </subcellularLocation>
</comment>
<comment type="PTM">
    <text evidence="1">4'-phosphopantetheine is transferred from CoA to a specific serine of apo-ACP by AcpS. This modification is essential for activity because fatty acids are bound in thioester linkage to the sulfhydryl of the prosthetic group.</text>
</comment>
<comment type="similarity">
    <text evidence="1">Belongs to the acyl carrier protein (ACP) family.</text>
</comment>
<organism>
    <name type="scientific">Geobacter metallireducens (strain ATCC 53774 / DSM 7210 / GS-15)</name>
    <dbReference type="NCBI Taxonomy" id="269799"/>
    <lineage>
        <taxon>Bacteria</taxon>
        <taxon>Pseudomonadati</taxon>
        <taxon>Thermodesulfobacteriota</taxon>
        <taxon>Desulfuromonadia</taxon>
        <taxon>Geobacterales</taxon>
        <taxon>Geobacteraceae</taxon>
        <taxon>Geobacter</taxon>
    </lineage>
</organism>
<name>ACP_GEOMG</name>
<sequence length="77" mass="8563">MSAIDKRVKEIVAEQLGVDEAQVTNEASFMDDLGADSLDTVELVMALEEEFDIEISDEDAEKIQSVQDAIDYITEHT</sequence>
<dbReference type="EMBL" id="CP000148">
    <property type="protein sequence ID" value="ABB31834.1"/>
    <property type="molecule type" value="Genomic_DNA"/>
</dbReference>
<dbReference type="RefSeq" id="WP_004511463.1">
    <property type="nucleotide sequence ID" value="NC_007517.1"/>
</dbReference>
<dbReference type="SMR" id="Q39V90"/>
<dbReference type="STRING" id="269799.Gmet_1602"/>
<dbReference type="KEGG" id="gme:Gmet_1602"/>
<dbReference type="eggNOG" id="COG0236">
    <property type="taxonomic scope" value="Bacteria"/>
</dbReference>
<dbReference type="HOGENOM" id="CLU_108696_5_1_7"/>
<dbReference type="UniPathway" id="UPA00094"/>
<dbReference type="Proteomes" id="UP000007073">
    <property type="component" value="Chromosome"/>
</dbReference>
<dbReference type="GO" id="GO:0005829">
    <property type="term" value="C:cytosol"/>
    <property type="evidence" value="ECO:0007669"/>
    <property type="project" value="TreeGrafter"/>
</dbReference>
<dbReference type="GO" id="GO:0016020">
    <property type="term" value="C:membrane"/>
    <property type="evidence" value="ECO:0007669"/>
    <property type="project" value="GOC"/>
</dbReference>
<dbReference type="GO" id="GO:0000035">
    <property type="term" value="F:acyl binding"/>
    <property type="evidence" value="ECO:0007669"/>
    <property type="project" value="TreeGrafter"/>
</dbReference>
<dbReference type="GO" id="GO:0000036">
    <property type="term" value="F:acyl carrier activity"/>
    <property type="evidence" value="ECO:0007669"/>
    <property type="project" value="UniProtKB-UniRule"/>
</dbReference>
<dbReference type="GO" id="GO:0009245">
    <property type="term" value="P:lipid A biosynthetic process"/>
    <property type="evidence" value="ECO:0007669"/>
    <property type="project" value="TreeGrafter"/>
</dbReference>
<dbReference type="FunFam" id="1.10.1200.10:FF:000001">
    <property type="entry name" value="Acyl carrier protein"/>
    <property type="match status" value="1"/>
</dbReference>
<dbReference type="Gene3D" id="1.10.1200.10">
    <property type="entry name" value="ACP-like"/>
    <property type="match status" value="1"/>
</dbReference>
<dbReference type="HAMAP" id="MF_01217">
    <property type="entry name" value="Acyl_carrier"/>
    <property type="match status" value="1"/>
</dbReference>
<dbReference type="InterPro" id="IPR003231">
    <property type="entry name" value="ACP"/>
</dbReference>
<dbReference type="InterPro" id="IPR036736">
    <property type="entry name" value="ACP-like_sf"/>
</dbReference>
<dbReference type="InterPro" id="IPR009081">
    <property type="entry name" value="PP-bd_ACP"/>
</dbReference>
<dbReference type="InterPro" id="IPR006162">
    <property type="entry name" value="Ppantetheine_attach_site"/>
</dbReference>
<dbReference type="NCBIfam" id="TIGR00517">
    <property type="entry name" value="acyl_carrier"/>
    <property type="match status" value="1"/>
</dbReference>
<dbReference type="NCBIfam" id="NF002148">
    <property type="entry name" value="PRK00982.1-2"/>
    <property type="match status" value="1"/>
</dbReference>
<dbReference type="NCBIfam" id="NF002149">
    <property type="entry name" value="PRK00982.1-3"/>
    <property type="match status" value="1"/>
</dbReference>
<dbReference type="NCBIfam" id="NF002150">
    <property type="entry name" value="PRK00982.1-4"/>
    <property type="match status" value="1"/>
</dbReference>
<dbReference type="NCBIfam" id="NF002151">
    <property type="entry name" value="PRK00982.1-5"/>
    <property type="match status" value="1"/>
</dbReference>
<dbReference type="PANTHER" id="PTHR20863">
    <property type="entry name" value="ACYL CARRIER PROTEIN"/>
    <property type="match status" value="1"/>
</dbReference>
<dbReference type="PANTHER" id="PTHR20863:SF76">
    <property type="entry name" value="CARRIER DOMAIN-CONTAINING PROTEIN"/>
    <property type="match status" value="1"/>
</dbReference>
<dbReference type="Pfam" id="PF00550">
    <property type="entry name" value="PP-binding"/>
    <property type="match status" value="1"/>
</dbReference>
<dbReference type="SUPFAM" id="SSF47336">
    <property type="entry name" value="ACP-like"/>
    <property type="match status" value="1"/>
</dbReference>
<dbReference type="PROSITE" id="PS50075">
    <property type="entry name" value="CARRIER"/>
    <property type="match status" value="1"/>
</dbReference>
<dbReference type="PROSITE" id="PS00012">
    <property type="entry name" value="PHOSPHOPANTETHEINE"/>
    <property type="match status" value="1"/>
</dbReference>
<feature type="chain" id="PRO_1000066612" description="Acyl carrier protein">
    <location>
        <begin position="1"/>
        <end position="77"/>
    </location>
</feature>
<feature type="domain" description="Carrier" evidence="2">
    <location>
        <begin position="2"/>
        <end position="77"/>
    </location>
</feature>
<feature type="modified residue" description="O-(pantetheine 4'-phosphoryl)serine" evidence="2">
    <location>
        <position position="37"/>
    </location>
</feature>
<reference key="1">
    <citation type="journal article" date="2009" name="BMC Microbiol.">
        <title>The genome sequence of Geobacter metallireducens: features of metabolism, physiology and regulation common and dissimilar to Geobacter sulfurreducens.</title>
        <authorList>
            <person name="Aklujkar M."/>
            <person name="Krushkal J."/>
            <person name="DiBartolo G."/>
            <person name="Lapidus A."/>
            <person name="Land M.L."/>
            <person name="Lovley D.R."/>
        </authorList>
    </citation>
    <scope>NUCLEOTIDE SEQUENCE [LARGE SCALE GENOMIC DNA]</scope>
    <source>
        <strain>ATCC 53774 / DSM 7210 / GS-15</strain>
    </source>
</reference>
<protein>
    <recommendedName>
        <fullName evidence="1">Acyl carrier protein</fullName>
        <shortName evidence="1">ACP</shortName>
    </recommendedName>
</protein>
<evidence type="ECO:0000255" key="1">
    <source>
        <dbReference type="HAMAP-Rule" id="MF_01217"/>
    </source>
</evidence>
<evidence type="ECO:0000255" key="2">
    <source>
        <dbReference type="PROSITE-ProRule" id="PRU00258"/>
    </source>
</evidence>
<gene>
    <name evidence="1" type="primary">acpP</name>
    <name type="ordered locus">Gmet_1602</name>
</gene>
<proteinExistence type="inferred from homology"/>
<accession>Q39V90</accession>